<sequence>MTNIITVNNLFFKYDSNQTHYQLENVSFHVKQGEWLSIIGHNGSGKSTTVRLIDGLLEAESGQIIIDGQELTEDNVWELRHKIGMVFQNPDNQFVGATVEDDVAFGLENKGIPLKDMKERVDQALDLVGMSEFKMREPARLSGGQKQRVAIAGAVAMRPQVIILDEATSMLDPEGRLELIRTIRAIRQKYNLTVISITHDLDEVALSDRVIVMKNGKVESTSTPKALFGRGNRLISLGLDVPFTSRLMAELAANGLDIGTEYLTEKELEEQLWELNLKM</sequence>
<comment type="function">
    <text evidence="1">ATP-binding (A) component of a common energy-coupling factor (ECF) ABC-transporter complex. Unlike classic ABC transporters this ECF transporter provides the energy necessary to transport a number of different substrates.</text>
</comment>
<comment type="subunit">
    <text evidence="1">Forms a stable energy-coupling factor (ECF) transporter complex composed of 2 membrane-embedded substrate-binding proteins (S component), 2 ATP-binding proteins (A component) and 2 transmembrane proteins (T component).</text>
</comment>
<comment type="subcellular location">
    <subcellularLocation>
        <location evidence="1">Cell membrane</location>
        <topology evidence="1">Peripheral membrane protein</topology>
    </subcellularLocation>
</comment>
<comment type="similarity">
    <text evidence="1">Belongs to the ABC transporter superfamily. Energy-coupling factor EcfA family.</text>
</comment>
<organism>
    <name type="scientific">Streptococcus agalactiae serotype III (strain NEM316)</name>
    <dbReference type="NCBI Taxonomy" id="211110"/>
    <lineage>
        <taxon>Bacteria</taxon>
        <taxon>Bacillati</taxon>
        <taxon>Bacillota</taxon>
        <taxon>Bacilli</taxon>
        <taxon>Lactobacillales</taxon>
        <taxon>Streptococcaceae</taxon>
        <taxon>Streptococcus</taxon>
    </lineage>
</organism>
<gene>
    <name evidence="1" type="primary">ecfA1</name>
    <name type="synonym">cbiO1</name>
    <name type="ordered locus">gbs2110</name>
</gene>
<accession>Q8E2L2</accession>
<evidence type="ECO:0000255" key="1">
    <source>
        <dbReference type="HAMAP-Rule" id="MF_01710"/>
    </source>
</evidence>
<name>ECFA1_STRA3</name>
<protein>
    <recommendedName>
        <fullName evidence="1">Energy-coupling factor transporter ATP-binding protein EcfA1</fullName>
        <shortName evidence="1">ECF transporter A component EcfA1</shortName>
        <ecNumber evidence="1">7.-.-.-</ecNumber>
    </recommendedName>
</protein>
<feature type="chain" id="PRO_0000092085" description="Energy-coupling factor transporter ATP-binding protein EcfA1">
    <location>
        <begin position="1"/>
        <end position="279"/>
    </location>
</feature>
<feature type="domain" description="ABC transporter" evidence="1">
    <location>
        <begin position="5"/>
        <end position="240"/>
    </location>
</feature>
<feature type="binding site" evidence="1">
    <location>
        <begin position="40"/>
        <end position="47"/>
    </location>
    <ligand>
        <name>ATP</name>
        <dbReference type="ChEBI" id="CHEBI:30616"/>
    </ligand>
</feature>
<proteinExistence type="inferred from homology"/>
<keyword id="KW-0067">ATP-binding</keyword>
<keyword id="KW-1003">Cell membrane</keyword>
<keyword id="KW-0472">Membrane</keyword>
<keyword id="KW-0547">Nucleotide-binding</keyword>
<keyword id="KW-1278">Translocase</keyword>
<keyword id="KW-0813">Transport</keyword>
<dbReference type="EC" id="7.-.-.-" evidence="1"/>
<dbReference type="EMBL" id="AL766856">
    <property type="protein sequence ID" value="CAD47769.1"/>
    <property type="molecule type" value="Genomic_DNA"/>
</dbReference>
<dbReference type="RefSeq" id="WP_000181757.1">
    <property type="nucleotide sequence ID" value="NC_004368.1"/>
</dbReference>
<dbReference type="SMR" id="Q8E2L2"/>
<dbReference type="KEGG" id="san:gbs2110"/>
<dbReference type="eggNOG" id="COG1122">
    <property type="taxonomic scope" value="Bacteria"/>
</dbReference>
<dbReference type="HOGENOM" id="CLU_000604_1_22_9"/>
<dbReference type="Proteomes" id="UP000000823">
    <property type="component" value="Chromosome"/>
</dbReference>
<dbReference type="GO" id="GO:0043190">
    <property type="term" value="C:ATP-binding cassette (ABC) transporter complex"/>
    <property type="evidence" value="ECO:0007669"/>
    <property type="project" value="TreeGrafter"/>
</dbReference>
<dbReference type="GO" id="GO:0005524">
    <property type="term" value="F:ATP binding"/>
    <property type="evidence" value="ECO:0007669"/>
    <property type="project" value="UniProtKB-KW"/>
</dbReference>
<dbReference type="GO" id="GO:0016887">
    <property type="term" value="F:ATP hydrolysis activity"/>
    <property type="evidence" value="ECO:0007669"/>
    <property type="project" value="InterPro"/>
</dbReference>
<dbReference type="GO" id="GO:0042626">
    <property type="term" value="F:ATPase-coupled transmembrane transporter activity"/>
    <property type="evidence" value="ECO:0007669"/>
    <property type="project" value="TreeGrafter"/>
</dbReference>
<dbReference type="CDD" id="cd03225">
    <property type="entry name" value="ABC_cobalt_CbiO_domain1"/>
    <property type="match status" value="1"/>
</dbReference>
<dbReference type="FunFam" id="3.40.50.300:FF:000224">
    <property type="entry name" value="Energy-coupling factor transporter ATP-binding protein EcfA"/>
    <property type="match status" value="1"/>
</dbReference>
<dbReference type="Gene3D" id="3.40.50.300">
    <property type="entry name" value="P-loop containing nucleotide triphosphate hydrolases"/>
    <property type="match status" value="1"/>
</dbReference>
<dbReference type="InterPro" id="IPR003593">
    <property type="entry name" value="AAA+_ATPase"/>
</dbReference>
<dbReference type="InterPro" id="IPR003439">
    <property type="entry name" value="ABC_transporter-like_ATP-bd"/>
</dbReference>
<dbReference type="InterPro" id="IPR017871">
    <property type="entry name" value="ABC_transporter-like_CS"/>
</dbReference>
<dbReference type="InterPro" id="IPR015856">
    <property type="entry name" value="ABC_transpr_CbiO/EcfA_su"/>
</dbReference>
<dbReference type="InterPro" id="IPR050095">
    <property type="entry name" value="ECF_ABC_transporter_ATP-bd"/>
</dbReference>
<dbReference type="InterPro" id="IPR030947">
    <property type="entry name" value="EcfA_1"/>
</dbReference>
<dbReference type="InterPro" id="IPR027417">
    <property type="entry name" value="P-loop_NTPase"/>
</dbReference>
<dbReference type="NCBIfam" id="TIGR04520">
    <property type="entry name" value="ECF_ATPase_1"/>
    <property type="match status" value="1"/>
</dbReference>
<dbReference type="NCBIfam" id="NF010156">
    <property type="entry name" value="PRK13635.1"/>
    <property type="match status" value="1"/>
</dbReference>
<dbReference type="NCBIfam" id="NF010167">
    <property type="entry name" value="PRK13648.1"/>
    <property type="match status" value="1"/>
</dbReference>
<dbReference type="PANTHER" id="PTHR43553:SF24">
    <property type="entry name" value="ENERGY-COUPLING FACTOR TRANSPORTER ATP-BINDING PROTEIN ECFA1"/>
    <property type="match status" value="1"/>
</dbReference>
<dbReference type="PANTHER" id="PTHR43553">
    <property type="entry name" value="HEAVY METAL TRANSPORTER"/>
    <property type="match status" value="1"/>
</dbReference>
<dbReference type="Pfam" id="PF00005">
    <property type="entry name" value="ABC_tran"/>
    <property type="match status" value="1"/>
</dbReference>
<dbReference type="SMART" id="SM00382">
    <property type="entry name" value="AAA"/>
    <property type="match status" value="1"/>
</dbReference>
<dbReference type="SUPFAM" id="SSF52540">
    <property type="entry name" value="P-loop containing nucleoside triphosphate hydrolases"/>
    <property type="match status" value="1"/>
</dbReference>
<dbReference type="PROSITE" id="PS00211">
    <property type="entry name" value="ABC_TRANSPORTER_1"/>
    <property type="match status" value="1"/>
</dbReference>
<dbReference type="PROSITE" id="PS50893">
    <property type="entry name" value="ABC_TRANSPORTER_2"/>
    <property type="match status" value="1"/>
</dbReference>
<dbReference type="PROSITE" id="PS51246">
    <property type="entry name" value="CBIO"/>
    <property type="match status" value="1"/>
</dbReference>
<reference key="1">
    <citation type="journal article" date="2002" name="Mol. Microbiol.">
        <title>Genome sequence of Streptococcus agalactiae, a pathogen causing invasive neonatal disease.</title>
        <authorList>
            <person name="Glaser P."/>
            <person name="Rusniok C."/>
            <person name="Buchrieser C."/>
            <person name="Chevalier F."/>
            <person name="Frangeul L."/>
            <person name="Msadek T."/>
            <person name="Zouine M."/>
            <person name="Couve E."/>
            <person name="Lalioui L."/>
            <person name="Poyart C."/>
            <person name="Trieu-Cuot P."/>
            <person name="Kunst F."/>
        </authorList>
    </citation>
    <scope>NUCLEOTIDE SEQUENCE [LARGE SCALE GENOMIC DNA]</scope>
    <source>
        <strain>NEM316</strain>
    </source>
</reference>